<proteinExistence type="inferred from homology"/>
<dbReference type="EMBL" id="CP000747">
    <property type="protein sequence ID" value="ACG77629.1"/>
    <property type="molecule type" value="Genomic_DNA"/>
</dbReference>
<dbReference type="RefSeq" id="WP_012521774.1">
    <property type="nucleotide sequence ID" value="NC_011144.1"/>
</dbReference>
<dbReference type="SMR" id="B4R8K2"/>
<dbReference type="STRING" id="450851.PHZ_c1215"/>
<dbReference type="KEGG" id="pzu:PHZ_c1215"/>
<dbReference type="eggNOG" id="COG0081">
    <property type="taxonomic scope" value="Bacteria"/>
</dbReference>
<dbReference type="HOGENOM" id="CLU_062853_0_0_5"/>
<dbReference type="OrthoDB" id="9803740at2"/>
<dbReference type="Proteomes" id="UP000001868">
    <property type="component" value="Chromosome"/>
</dbReference>
<dbReference type="GO" id="GO:0022625">
    <property type="term" value="C:cytosolic large ribosomal subunit"/>
    <property type="evidence" value="ECO:0007669"/>
    <property type="project" value="TreeGrafter"/>
</dbReference>
<dbReference type="GO" id="GO:0019843">
    <property type="term" value="F:rRNA binding"/>
    <property type="evidence" value="ECO:0007669"/>
    <property type="project" value="UniProtKB-UniRule"/>
</dbReference>
<dbReference type="GO" id="GO:0003735">
    <property type="term" value="F:structural constituent of ribosome"/>
    <property type="evidence" value="ECO:0007669"/>
    <property type="project" value="InterPro"/>
</dbReference>
<dbReference type="GO" id="GO:0000049">
    <property type="term" value="F:tRNA binding"/>
    <property type="evidence" value="ECO:0007669"/>
    <property type="project" value="UniProtKB-KW"/>
</dbReference>
<dbReference type="GO" id="GO:0006417">
    <property type="term" value="P:regulation of translation"/>
    <property type="evidence" value="ECO:0007669"/>
    <property type="project" value="UniProtKB-KW"/>
</dbReference>
<dbReference type="GO" id="GO:0006412">
    <property type="term" value="P:translation"/>
    <property type="evidence" value="ECO:0007669"/>
    <property type="project" value="UniProtKB-UniRule"/>
</dbReference>
<dbReference type="CDD" id="cd00403">
    <property type="entry name" value="Ribosomal_L1"/>
    <property type="match status" value="1"/>
</dbReference>
<dbReference type="FunFam" id="3.40.50.790:FF:000001">
    <property type="entry name" value="50S ribosomal protein L1"/>
    <property type="match status" value="1"/>
</dbReference>
<dbReference type="Gene3D" id="3.30.190.20">
    <property type="match status" value="1"/>
</dbReference>
<dbReference type="Gene3D" id="3.40.50.790">
    <property type="match status" value="1"/>
</dbReference>
<dbReference type="HAMAP" id="MF_01318_B">
    <property type="entry name" value="Ribosomal_uL1_B"/>
    <property type="match status" value="1"/>
</dbReference>
<dbReference type="InterPro" id="IPR005878">
    <property type="entry name" value="Ribosom_uL1_bac-type"/>
</dbReference>
<dbReference type="InterPro" id="IPR002143">
    <property type="entry name" value="Ribosomal_uL1"/>
</dbReference>
<dbReference type="InterPro" id="IPR023674">
    <property type="entry name" value="Ribosomal_uL1-like"/>
</dbReference>
<dbReference type="InterPro" id="IPR028364">
    <property type="entry name" value="Ribosomal_uL1/biogenesis"/>
</dbReference>
<dbReference type="InterPro" id="IPR016095">
    <property type="entry name" value="Ribosomal_uL1_3-a/b-sand"/>
</dbReference>
<dbReference type="InterPro" id="IPR023673">
    <property type="entry name" value="Ribosomal_uL1_CS"/>
</dbReference>
<dbReference type="NCBIfam" id="TIGR01169">
    <property type="entry name" value="rplA_bact"/>
    <property type="match status" value="1"/>
</dbReference>
<dbReference type="PANTHER" id="PTHR36427">
    <property type="entry name" value="54S RIBOSOMAL PROTEIN L1, MITOCHONDRIAL"/>
    <property type="match status" value="1"/>
</dbReference>
<dbReference type="PANTHER" id="PTHR36427:SF3">
    <property type="entry name" value="LARGE RIBOSOMAL SUBUNIT PROTEIN UL1M"/>
    <property type="match status" value="1"/>
</dbReference>
<dbReference type="Pfam" id="PF00687">
    <property type="entry name" value="Ribosomal_L1"/>
    <property type="match status" value="1"/>
</dbReference>
<dbReference type="PIRSF" id="PIRSF002155">
    <property type="entry name" value="Ribosomal_L1"/>
    <property type="match status" value="1"/>
</dbReference>
<dbReference type="SUPFAM" id="SSF56808">
    <property type="entry name" value="Ribosomal protein L1"/>
    <property type="match status" value="1"/>
</dbReference>
<dbReference type="PROSITE" id="PS01199">
    <property type="entry name" value="RIBOSOMAL_L1"/>
    <property type="match status" value="1"/>
</dbReference>
<protein>
    <recommendedName>
        <fullName evidence="1">Large ribosomal subunit protein uL1</fullName>
    </recommendedName>
    <alternativeName>
        <fullName evidence="2">50S ribosomal protein L1</fullName>
    </alternativeName>
</protein>
<keyword id="KW-1185">Reference proteome</keyword>
<keyword id="KW-0678">Repressor</keyword>
<keyword id="KW-0687">Ribonucleoprotein</keyword>
<keyword id="KW-0689">Ribosomal protein</keyword>
<keyword id="KW-0694">RNA-binding</keyword>
<keyword id="KW-0699">rRNA-binding</keyword>
<keyword id="KW-0810">Translation regulation</keyword>
<keyword id="KW-0820">tRNA-binding</keyword>
<feature type="chain" id="PRO_1000141439" description="Large ribosomal subunit protein uL1">
    <location>
        <begin position="1"/>
        <end position="229"/>
    </location>
</feature>
<comment type="function">
    <text evidence="1">Binds directly to 23S rRNA. The L1 stalk is quite mobile in the ribosome, and is involved in E site tRNA release.</text>
</comment>
<comment type="function">
    <text evidence="1">Protein L1 is also a translational repressor protein, it controls the translation of the L11 operon by binding to its mRNA.</text>
</comment>
<comment type="subunit">
    <text evidence="1">Part of the 50S ribosomal subunit.</text>
</comment>
<comment type="similarity">
    <text evidence="1">Belongs to the universal ribosomal protein uL1 family.</text>
</comment>
<organism>
    <name type="scientific">Phenylobacterium zucineum (strain HLK1)</name>
    <dbReference type="NCBI Taxonomy" id="450851"/>
    <lineage>
        <taxon>Bacteria</taxon>
        <taxon>Pseudomonadati</taxon>
        <taxon>Pseudomonadota</taxon>
        <taxon>Alphaproteobacteria</taxon>
        <taxon>Caulobacterales</taxon>
        <taxon>Caulobacteraceae</taxon>
        <taxon>Phenylobacterium</taxon>
    </lineage>
</organism>
<reference key="1">
    <citation type="journal article" date="2008" name="BMC Genomics">
        <title>Complete genome of Phenylobacterium zucineum - a novel facultative intracellular bacterium isolated from human erythroleukemia cell line K562.</title>
        <authorList>
            <person name="Luo Y."/>
            <person name="Xu X."/>
            <person name="Ding Z."/>
            <person name="Liu Z."/>
            <person name="Zhang B."/>
            <person name="Yan Z."/>
            <person name="Sun J."/>
            <person name="Hu S."/>
            <person name="Hu X."/>
        </authorList>
    </citation>
    <scope>NUCLEOTIDE SEQUENCE [LARGE SCALE GENOMIC DNA]</scope>
    <source>
        <strain>HLK1</strain>
    </source>
</reference>
<gene>
    <name evidence="1" type="primary">rplA</name>
    <name type="ordered locus">PHZ_c1215</name>
</gene>
<evidence type="ECO:0000255" key="1">
    <source>
        <dbReference type="HAMAP-Rule" id="MF_01318"/>
    </source>
</evidence>
<evidence type="ECO:0000305" key="2"/>
<accession>B4R8K2</accession>
<sequence>MAKQPKRMQKWTGDVAATHALDEAVKLVKANANAKFDETVEIAVNLGVDPRHADQQVRGVVALPSGTGRDVRVAVIAKDAKAEEAKAAGAEVVGAEDLVERIQGGFMDFDRVIATPDMMALVGRLGKVLGPRGLMPNPRVGTVTPNVGQAVKDAKGGSIEFRVEKAGIVHAGIGKASFTEEQLTANVKAMVDALNKAKPSGAKGTYVKKVSLSSTMGPGFKIDVASLGV</sequence>
<name>RL1_PHEZH</name>